<name>ADE_MARMS</name>
<sequence length="335" mass="38033">METLIELSKKMPKTELHLHIEGTFEPEQMFAIAQRNQVELKYSTVDALKAAYQFTNLQDFLDLYYQGMSVLLHEADFYDLTMAYLEKVHSENVVHVEIFFDPQGHLSRGVGFDVQIQGIYKALQDAEKKWGMTSKLIMSFLRHLSEESAFETLELAKPHLKWIDGIGLDSSEVGHPPEKFLRVFEACKNLGLKVTAHAGEEGPPDYVWQAIEQIGVDRIDHGNRALEDNKLIEAIKQRNLTLTVCPLSNLKLCVVNDMKNHPIKNMLALGLNATVNSDDPAYFGGYMNDNYASLINGTRISKEELFQLAKNGITGSWMEDHLKELHLKQLHALFA</sequence>
<proteinExistence type="inferred from homology"/>
<organism>
    <name type="scientific">Marinomonas sp. (strain MWYL1)</name>
    <dbReference type="NCBI Taxonomy" id="400668"/>
    <lineage>
        <taxon>Bacteria</taxon>
        <taxon>Pseudomonadati</taxon>
        <taxon>Pseudomonadota</taxon>
        <taxon>Gammaproteobacteria</taxon>
        <taxon>Oceanospirillales</taxon>
        <taxon>Oceanospirillaceae</taxon>
        <taxon>Marinomonas</taxon>
    </lineage>
</organism>
<comment type="function">
    <text evidence="1">Catalyzes the hydrolytic deamination of adenine to hypoxanthine. Plays an important role in the purine salvage pathway and in nitrogen catabolism.</text>
</comment>
<comment type="catalytic activity">
    <reaction evidence="1">
        <text>adenine + H2O + H(+) = hypoxanthine + NH4(+)</text>
        <dbReference type="Rhea" id="RHEA:23688"/>
        <dbReference type="ChEBI" id="CHEBI:15377"/>
        <dbReference type="ChEBI" id="CHEBI:15378"/>
        <dbReference type="ChEBI" id="CHEBI:16708"/>
        <dbReference type="ChEBI" id="CHEBI:17368"/>
        <dbReference type="ChEBI" id="CHEBI:28938"/>
        <dbReference type="EC" id="3.5.4.2"/>
    </reaction>
</comment>
<comment type="cofactor">
    <cofactor evidence="1">
        <name>Zn(2+)</name>
        <dbReference type="ChEBI" id="CHEBI:29105"/>
    </cofactor>
    <text evidence="1">Binds 1 zinc ion per subunit.</text>
</comment>
<comment type="similarity">
    <text evidence="1">Belongs to the metallo-dependent hydrolases superfamily. Adenosine and AMP deaminases family. Adenine deaminase type 2 subfamily.</text>
</comment>
<accession>A6VWL7</accession>
<gene>
    <name type="ordered locus">Mmwyl1_1922</name>
</gene>
<protein>
    <recommendedName>
        <fullName evidence="1">Adenine deaminase</fullName>
        <shortName evidence="1">ADE</shortName>
        <ecNumber evidence="1">3.5.4.2</ecNumber>
    </recommendedName>
    <alternativeName>
        <fullName evidence="1">Adenine aminohydrolase</fullName>
        <shortName evidence="1">AAH</shortName>
    </alternativeName>
</protein>
<reference key="1">
    <citation type="submission" date="2007-06" db="EMBL/GenBank/DDBJ databases">
        <title>Complete sequence of Marinomonas sp. MWYL1.</title>
        <authorList>
            <consortium name="US DOE Joint Genome Institute"/>
            <person name="Copeland A."/>
            <person name="Lucas S."/>
            <person name="Lapidus A."/>
            <person name="Barry K."/>
            <person name="Glavina del Rio T."/>
            <person name="Dalin E."/>
            <person name="Tice H."/>
            <person name="Pitluck S."/>
            <person name="Kiss H."/>
            <person name="Brettin T."/>
            <person name="Bruce D."/>
            <person name="Detter J.C."/>
            <person name="Han C."/>
            <person name="Schmutz J."/>
            <person name="Larimer F."/>
            <person name="Land M."/>
            <person name="Hauser L."/>
            <person name="Kyrpides N."/>
            <person name="Kim E."/>
            <person name="Johnston A.W.B."/>
            <person name="Todd J.D."/>
            <person name="Rogers R."/>
            <person name="Wexler M."/>
            <person name="Bond P.L."/>
            <person name="Li Y."/>
            <person name="Richardson P."/>
        </authorList>
    </citation>
    <scope>NUCLEOTIDE SEQUENCE [LARGE SCALE GENOMIC DNA]</scope>
    <source>
        <strain>MWYL1</strain>
    </source>
</reference>
<feature type="chain" id="PRO_1000081925" description="Adenine deaminase">
    <location>
        <begin position="1"/>
        <end position="335"/>
    </location>
</feature>
<feature type="active site" description="Proton donor" evidence="1">
    <location>
        <position position="200"/>
    </location>
</feature>
<feature type="binding site" evidence="1">
    <location>
        <position position="17"/>
    </location>
    <ligand>
        <name>Zn(2+)</name>
        <dbReference type="ChEBI" id="CHEBI:29105"/>
        <note>catalytic</note>
    </ligand>
</feature>
<feature type="binding site" evidence="1">
    <location>
        <position position="19"/>
    </location>
    <ligand>
        <name>Zn(2+)</name>
        <dbReference type="ChEBI" id="CHEBI:29105"/>
        <note>catalytic</note>
    </ligand>
</feature>
<feature type="binding site" evidence="1">
    <location>
        <position position="197"/>
    </location>
    <ligand>
        <name>Zn(2+)</name>
        <dbReference type="ChEBI" id="CHEBI:29105"/>
        <note>catalytic</note>
    </ligand>
</feature>
<feature type="binding site" evidence="1">
    <location>
        <position position="278"/>
    </location>
    <ligand>
        <name>Zn(2+)</name>
        <dbReference type="ChEBI" id="CHEBI:29105"/>
        <note>catalytic</note>
    </ligand>
</feature>
<feature type="binding site" evidence="1">
    <location>
        <position position="279"/>
    </location>
    <ligand>
        <name>substrate</name>
    </ligand>
</feature>
<feature type="site" description="Important for catalytic activity" evidence="1">
    <location>
        <position position="221"/>
    </location>
</feature>
<dbReference type="EC" id="3.5.4.2" evidence="1"/>
<dbReference type="EMBL" id="CP000749">
    <property type="protein sequence ID" value="ABR70846.1"/>
    <property type="molecule type" value="Genomic_DNA"/>
</dbReference>
<dbReference type="SMR" id="A6VWL7"/>
<dbReference type="STRING" id="400668.Mmwyl1_1922"/>
<dbReference type="KEGG" id="mmw:Mmwyl1_1922"/>
<dbReference type="eggNOG" id="COG1816">
    <property type="taxonomic scope" value="Bacteria"/>
</dbReference>
<dbReference type="HOGENOM" id="CLU_039228_7_0_6"/>
<dbReference type="OrthoDB" id="105475at2"/>
<dbReference type="GO" id="GO:0005829">
    <property type="term" value="C:cytosol"/>
    <property type="evidence" value="ECO:0007669"/>
    <property type="project" value="TreeGrafter"/>
</dbReference>
<dbReference type="GO" id="GO:0000034">
    <property type="term" value="F:adenine deaminase activity"/>
    <property type="evidence" value="ECO:0007669"/>
    <property type="project" value="UniProtKB-UniRule"/>
</dbReference>
<dbReference type="GO" id="GO:0008270">
    <property type="term" value="F:zinc ion binding"/>
    <property type="evidence" value="ECO:0007669"/>
    <property type="project" value="UniProtKB-UniRule"/>
</dbReference>
<dbReference type="GO" id="GO:0006146">
    <property type="term" value="P:adenine catabolic process"/>
    <property type="evidence" value="ECO:0007669"/>
    <property type="project" value="UniProtKB-UniRule"/>
</dbReference>
<dbReference type="GO" id="GO:0043103">
    <property type="term" value="P:hypoxanthine salvage"/>
    <property type="evidence" value="ECO:0007669"/>
    <property type="project" value="UniProtKB-UniRule"/>
</dbReference>
<dbReference type="GO" id="GO:0009117">
    <property type="term" value="P:nucleotide metabolic process"/>
    <property type="evidence" value="ECO:0007669"/>
    <property type="project" value="UniProtKB-KW"/>
</dbReference>
<dbReference type="CDD" id="cd01320">
    <property type="entry name" value="ADA"/>
    <property type="match status" value="1"/>
</dbReference>
<dbReference type="FunFam" id="3.20.20.140:FF:000039">
    <property type="entry name" value="Adenine deaminase"/>
    <property type="match status" value="1"/>
</dbReference>
<dbReference type="Gene3D" id="3.20.20.140">
    <property type="entry name" value="Metal-dependent hydrolases"/>
    <property type="match status" value="1"/>
</dbReference>
<dbReference type="HAMAP" id="MF_01962">
    <property type="entry name" value="Adenine_deaminase"/>
    <property type="match status" value="1"/>
</dbReference>
<dbReference type="InterPro" id="IPR001365">
    <property type="entry name" value="A_deaminase_dom"/>
</dbReference>
<dbReference type="InterPro" id="IPR028892">
    <property type="entry name" value="ADE"/>
</dbReference>
<dbReference type="InterPro" id="IPR006330">
    <property type="entry name" value="Ado/ade_deaminase"/>
</dbReference>
<dbReference type="InterPro" id="IPR032466">
    <property type="entry name" value="Metal_Hydrolase"/>
</dbReference>
<dbReference type="NCBIfam" id="TIGR01430">
    <property type="entry name" value="aden_deam"/>
    <property type="match status" value="1"/>
</dbReference>
<dbReference type="NCBIfam" id="NF006850">
    <property type="entry name" value="PRK09358.1-6"/>
    <property type="match status" value="1"/>
</dbReference>
<dbReference type="PANTHER" id="PTHR43114">
    <property type="entry name" value="ADENINE DEAMINASE"/>
    <property type="match status" value="1"/>
</dbReference>
<dbReference type="PANTHER" id="PTHR43114:SF6">
    <property type="entry name" value="ADENINE DEAMINASE"/>
    <property type="match status" value="1"/>
</dbReference>
<dbReference type="Pfam" id="PF00962">
    <property type="entry name" value="A_deaminase"/>
    <property type="match status" value="1"/>
</dbReference>
<dbReference type="SUPFAM" id="SSF51556">
    <property type="entry name" value="Metallo-dependent hydrolases"/>
    <property type="match status" value="1"/>
</dbReference>
<evidence type="ECO:0000255" key="1">
    <source>
        <dbReference type="HAMAP-Rule" id="MF_01962"/>
    </source>
</evidence>
<keyword id="KW-0378">Hydrolase</keyword>
<keyword id="KW-0479">Metal-binding</keyword>
<keyword id="KW-0546">Nucleotide metabolism</keyword>
<keyword id="KW-0862">Zinc</keyword>